<evidence type="ECO:0000255" key="1">
    <source>
        <dbReference type="HAMAP-Rule" id="MF_01864"/>
    </source>
</evidence>
<evidence type="ECO:0000255" key="2">
    <source>
        <dbReference type="PROSITE-ProRule" id="PRU01266"/>
    </source>
</evidence>
<sequence>MTQDSALLKAPEQTLRDGSNSRKVFIKTYGCQMNVYDSTRMSDALARDGYEPTEDMEEADLVLLNTCHIREKAAEKVYSALGRLREMKKKKAADGREMMIGVAGCVAQAEGEEILRRAPAVDVVIGPQTYHRLPEALRRAKEGQRVVDTEYAIEDKFEHLPVAESRKIRARGVTAFLTVQEGCDKFCTFCVVPYTRGSEVSRPVSQIVEEAEKLVEGGVREITLLGQNVNAWHGAGPRGEAWSLGDLLYRLAEIPGLARLRYTTSHPRDMDDRLIAAHRDLRALMPYLHLPVQSGSDRILKAMNRRHTAAEYLSLIERIRAVRPDIALSGDFITGFPGETDKDFEDTLRLVEEVRYAQAFSFKYSTRPGTPGAELKDQVPEEIKAERLERLQALLLKQQQEFAESCIGKEIDLLLEKPGRMPGQLIGRSPWLQSVNVDAKASQIGDIIKVRITGTGTNSLFAERAEAAV</sequence>
<keyword id="KW-0004">4Fe-4S</keyword>
<keyword id="KW-0963">Cytoplasm</keyword>
<keyword id="KW-0408">Iron</keyword>
<keyword id="KW-0411">Iron-sulfur</keyword>
<keyword id="KW-0479">Metal-binding</keyword>
<keyword id="KW-1185">Reference proteome</keyword>
<keyword id="KW-0949">S-adenosyl-L-methionine</keyword>
<keyword id="KW-0808">Transferase</keyword>
<keyword id="KW-0819">tRNA processing</keyword>
<organism>
    <name type="scientific">Rhizobium etli (strain ATCC 51251 / DSM 11541 / JCM 21823 / NBRC 15573 / CFN 42)</name>
    <dbReference type="NCBI Taxonomy" id="347834"/>
    <lineage>
        <taxon>Bacteria</taxon>
        <taxon>Pseudomonadati</taxon>
        <taxon>Pseudomonadota</taxon>
        <taxon>Alphaproteobacteria</taxon>
        <taxon>Hyphomicrobiales</taxon>
        <taxon>Rhizobiaceae</taxon>
        <taxon>Rhizobium/Agrobacterium group</taxon>
        <taxon>Rhizobium</taxon>
    </lineage>
</organism>
<name>MIAB_RHIEC</name>
<dbReference type="EC" id="2.8.4.3" evidence="1"/>
<dbReference type="EMBL" id="CP000133">
    <property type="protein sequence ID" value="ABC89198.1"/>
    <property type="molecule type" value="Genomic_DNA"/>
</dbReference>
<dbReference type="RefSeq" id="WP_011423758.1">
    <property type="nucleotide sequence ID" value="NC_007761.1"/>
</dbReference>
<dbReference type="SMR" id="Q2KD88"/>
<dbReference type="KEGG" id="ret:RHE_CH00376"/>
<dbReference type="eggNOG" id="COG0621">
    <property type="taxonomic scope" value="Bacteria"/>
</dbReference>
<dbReference type="HOGENOM" id="CLU_018697_2_0_5"/>
<dbReference type="OrthoDB" id="9805215at2"/>
<dbReference type="Proteomes" id="UP000001936">
    <property type="component" value="Chromosome"/>
</dbReference>
<dbReference type="GO" id="GO:0005829">
    <property type="term" value="C:cytosol"/>
    <property type="evidence" value="ECO:0007669"/>
    <property type="project" value="TreeGrafter"/>
</dbReference>
<dbReference type="GO" id="GO:0051539">
    <property type="term" value="F:4 iron, 4 sulfur cluster binding"/>
    <property type="evidence" value="ECO:0007669"/>
    <property type="project" value="UniProtKB-UniRule"/>
</dbReference>
<dbReference type="GO" id="GO:0046872">
    <property type="term" value="F:metal ion binding"/>
    <property type="evidence" value="ECO:0007669"/>
    <property type="project" value="UniProtKB-KW"/>
</dbReference>
<dbReference type="GO" id="GO:0035597">
    <property type="term" value="F:N6-isopentenyladenosine methylthiotransferase activity"/>
    <property type="evidence" value="ECO:0007669"/>
    <property type="project" value="TreeGrafter"/>
</dbReference>
<dbReference type="CDD" id="cd01335">
    <property type="entry name" value="Radical_SAM"/>
    <property type="match status" value="1"/>
</dbReference>
<dbReference type="FunFam" id="3.40.50.12160:FF:000001">
    <property type="entry name" value="tRNA-2-methylthio-N(6)-dimethylallyladenosine synthase"/>
    <property type="match status" value="1"/>
</dbReference>
<dbReference type="FunFam" id="3.80.30.20:FF:000001">
    <property type="entry name" value="tRNA-2-methylthio-N(6)-dimethylallyladenosine synthase 2"/>
    <property type="match status" value="1"/>
</dbReference>
<dbReference type="Gene3D" id="3.40.50.12160">
    <property type="entry name" value="Methylthiotransferase, N-terminal domain"/>
    <property type="match status" value="1"/>
</dbReference>
<dbReference type="Gene3D" id="3.80.30.20">
    <property type="entry name" value="tm_1862 like domain"/>
    <property type="match status" value="1"/>
</dbReference>
<dbReference type="HAMAP" id="MF_01864">
    <property type="entry name" value="tRNA_metthiotr_MiaB"/>
    <property type="match status" value="1"/>
</dbReference>
<dbReference type="InterPro" id="IPR006638">
    <property type="entry name" value="Elp3/MiaA/NifB-like_rSAM"/>
</dbReference>
<dbReference type="InterPro" id="IPR005839">
    <property type="entry name" value="Methylthiotransferase"/>
</dbReference>
<dbReference type="InterPro" id="IPR020612">
    <property type="entry name" value="Methylthiotransferase_CS"/>
</dbReference>
<dbReference type="InterPro" id="IPR013848">
    <property type="entry name" value="Methylthiotransferase_N"/>
</dbReference>
<dbReference type="InterPro" id="IPR038135">
    <property type="entry name" value="Methylthiotransferase_N_sf"/>
</dbReference>
<dbReference type="InterPro" id="IPR006463">
    <property type="entry name" value="MiaB_methiolase"/>
</dbReference>
<dbReference type="InterPro" id="IPR007197">
    <property type="entry name" value="rSAM"/>
</dbReference>
<dbReference type="InterPro" id="IPR023404">
    <property type="entry name" value="rSAM_horseshoe"/>
</dbReference>
<dbReference type="InterPro" id="IPR002792">
    <property type="entry name" value="TRAM_dom"/>
</dbReference>
<dbReference type="NCBIfam" id="TIGR01574">
    <property type="entry name" value="miaB-methiolase"/>
    <property type="match status" value="1"/>
</dbReference>
<dbReference type="NCBIfam" id="TIGR00089">
    <property type="entry name" value="MiaB/RimO family radical SAM methylthiotransferase"/>
    <property type="match status" value="1"/>
</dbReference>
<dbReference type="PANTHER" id="PTHR43020">
    <property type="entry name" value="CDK5 REGULATORY SUBUNIT-ASSOCIATED PROTEIN 1"/>
    <property type="match status" value="1"/>
</dbReference>
<dbReference type="PANTHER" id="PTHR43020:SF2">
    <property type="entry name" value="MITOCHONDRIAL TRNA METHYLTHIOTRANSFERASE CDK5RAP1"/>
    <property type="match status" value="1"/>
</dbReference>
<dbReference type="Pfam" id="PF04055">
    <property type="entry name" value="Radical_SAM"/>
    <property type="match status" value="1"/>
</dbReference>
<dbReference type="Pfam" id="PF01938">
    <property type="entry name" value="TRAM"/>
    <property type="match status" value="1"/>
</dbReference>
<dbReference type="Pfam" id="PF00919">
    <property type="entry name" value="UPF0004"/>
    <property type="match status" value="1"/>
</dbReference>
<dbReference type="SFLD" id="SFLDF00273">
    <property type="entry name" value="(dimethylallyl)adenosine_tRNA"/>
    <property type="match status" value="1"/>
</dbReference>
<dbReference type="SFLD" id="SFLDG01082">
    <property type="entry name" value="B12-binding_domain_containing"/>
    <property type="match status" value="1"/>
</dbReference>
<dbReference type="SFLD" id="SFLDS00029">
    <property type="entry name" value="Radical_SAM"/>
    <property type="match status" value="1"/>
</dbReference>
<dbReference type="SMART" id="SM00729">
    <property type="entry name" value="Elp3"/>
    <property type="match status" value="1"/>
</dbReference>
<dbReference type="SUPFAM" id="SSF102114">
    <property type="entry name" value="Radical SAM enzymes"/>
    <property type="match status" value="1"/>
</dbReference>
<dbReference type="PROSITE" id="PS51449">
    <property type="entry name" value="MTTASE_N"/>
    <property type="match status" value="1"/>
</dbReference>
<dbReference type="PROSITE" id="PS01278">
    <property type="entry name" value="MTTASE_RADICAL"/>
    <property type="match status" value="1"/>
</dbReference>
<dbReference type="PROSITE" id="PS51918">
    <property type="entry name" value="RADICAL_SAM"/>
    <property type="match status" value="1"/>
</dbReference>
<dbReference type="PROSITE" id="PS50926">
    <property type="entry name" value="TRAM"/>
    <property type="match status" value="1"/>
</dbReference>
<proteinExistence type="inferred from homology"/>
<feature type="chain" id="PRO_0000374481" description="tRNA-2-methylthio-N(6)-dimethylallyladenosine synthase">
    <location>
        <begin position="1"/>
        <end position="469"/>
    </location>
</feature>
<feature type="domain" description="MTTase N-terminal" evidence="1">
    <location>
        <begin position="22"/>
        <end position="142"/>
    </location>
</feature>
<feature type="domain" description="Radical SAM core" evidence="2">
    <location>
        <begin position="169"/>
        <end position="401"/>
    </location>
</feature>
<feature type="domain" description="TRAM" evidence="1">
    <location>
        <begin position="404"/>
        <end position="466"/>
    </location>
</feature>
<feature type="binding site" evidence="1">
    <location>
        <position position="31"/>
    </location>
    <ligand>
        <name>[4Fe-4S] cluster</name>
        <dbReference type="ChEBI" id="CHEBI:49883"/>
        <label>1</label>
    </ligand>
</feature>
<feature type="binding site" evidence="1">
    <location>
        <position position="67"/>
    </location>
    <ligand>
        <name>[4Fe-4S] cluster</name>
        <dbReference type="ChEBI" id="CHEBI:49883"/>
        <label>1</label>
    </ligand>
</feature>
<feature type="binding site" evidence="1">
    <location>
        <position position="105"/>
    </location>
    <ligand>
        <name>[4Fe-4S] cluster</name>
        <dbReference type="ChEBI" id="CHEBI:49883"/>
        <label>1</label>
    </ligand>
</feature>
<feature type="binding site" evidence="1">
    <location>
        <position position="183"/>
    </location>
    <ligand>
        <name>[4Fe-4S] cluster</name>
        <dbReference type="ChEBI" id="CHEBI:49883"/>
        <label>2</label>
        <note>4Fe-4S-S-AdoMet</note>
    </ligand>
</feature>
<feature type="binding site" evidence="1">
    <location>
        <position position="187"/>
    </location>
    <ligand>
        <name>[4Fe-4S] cluster</name>
        <dbReference type="ChEBI" id="CHEBI:49883"/>
        <label>2</label>
        <note>4Fe-4S-S-AdoMet</note>
    </ligand>
</feature>
<feature type="binding site" evidence="1">
    <location>
        <position position="190"/>
    </location>
    <ligand>
        <name>[4Fe-4S] cluster</name>
        <dbReference type="ChEBI" id="CHEBI:49883"/>
        <label>2</label>
        <note>4Fe-4S-S-AdoMet</note>
    </ligand>
</feature>
<reference key="1">
    <citation type="journal article" date="2006" name="Proc. Natl. Acad. Sci. U.S.A.">
        <title>The partitioned Rhizobium etli genome: genetic and metabolic redundancy in seven interacting replicons.</title>
        <authorList>
            <person name="Gonzalez V."/>
            <person name="Santamaria R.I."/>
            <person name="Bustos P."/>
            <person name="Hernandez-Gonzalez I."/>
            <person name="Medrano-Soto A."/>
            <person name="Moreno-Hagelsieb G."/>
            <person name="Janga S.C."/>
            <person name="Ramirez M.A."/>
            <person name="Jimenez-Jacinto V."/>
            <person name="Collado-Vides J."/>
            <person name="Davila G."/>
        </authorList>
    </citation>
    <scope>NUCLEOTIDE SEQUENCE [LARGE SCALE GENOMIC DNA]</scope>
    <source>
        <strain>ATCC 51251 / DSM 11541 / JCM 21823 / NBRC 15573 / CFN 42</strain>
    </source>
</reference>
<comment type="function">
    <text evidence="1">Catalyzes the methylthiolation of N6-(dimethylallyl)adenosine (i(6)A), leading to the formation of 2-methylthio-N6-(dimethylallyl)adenosine (ms(2)i(6)A) at position 37 in tRNAs that read codons beginning with uridine.</text>
</comment>
<comment type="catalytic activity">
    <reaction evidence="1">
        <text>N(6)-dimethylallyladenosine(37) in tRNA + (sulfur carrier)-SH + AH2 + 2 S-adenosyl-L-methionine = 2-methylsulfanyl-N(6)-dimethylallyladenosine(37) in tRNA + (sulfur carrier)-H + 5'-deoxyadenosine + L-methionine + A + S-adenosyl-L-homocysteine + 2 H(+)</text>
        <dbReference type="Rhea" id="RHEA:37067"/>
        <dbReference type="Rhea" id="RHEA-COMP:10375"/>
        <dbReference type="Rhea" id="RHEA-COMP:10376"/>
        <dbReference type="Rhea" id="RHEA-COMP:14737"/>
        <dbReference type="Rhea" id="RHEA-COMP:14739"/>
        <dbReference type="ChEBI" id="CHEBI:13193"/>
        <dbReference type="ChEBI" id="CHEBI:15378"/>
        <dbReference type="ChEBI" id="CHEBI:17319"/>
        <dbReference type="ChEBI" id="CHEBI:17499"/>
        <dbReference type="ChEBI" id="CHEBI:29917"/>
        <dbReference type="ChEBI" id="CHEBI:57844"/>
        <dbReference type="ChEBI" id="CHEBI:57856"/>
        <dbReference type="ChEBI" id="CHEBI:59789"/>
        <dbReference type="ChEBI" id="CHEBI:64428"/>
        <dbReference type="ChEBI" id="CHEBI:74415"/>
        <dbReference type="ChEBI" id="CHEBI:74417"/>
        <dbReference type="EC" id="2.8.4.3"/>
    </reaction>
</comment>
<comment type="cofactor">
    <cofactor evidence="1">
        <name>[4Fe-4S] cluster</name>
        <dbReference type="ChEBI" id="CHEBI:49883"/>
    </cofactor>
    <text evidence="1">Binds 2 [4Fe-4S] clusters. One cluster is coordinated with 3 cysteines and an exchangeable S-adenosyl-L-methionine.</text>
</comment>
<comment type="subunit">
    <text evidence="1">Monomer.</text>
</comment>
<comment type="subcellular location">
    <subcellularLocation>
        <location evidence="1">Cytoplasm</location>
    </subcellularLocation>
</comment>
<comment type="similarity">
    <text evidence="1">Belongs to the methylthiotransferase family. MiaB subfamily.</text>
</comment>
<accession>Q2KD88</accession>
<protein>
    <recommendedName>
        <fullName evidence="1">tRNA-2-methylthio-N(6)-dimethylallyladenosine synthase</fullName>
        <ecNumber evidence="1">2.8.4.3</ecNumber>
    </recommendedName>
    <alternativeName>
        <fullName evidence="1">(Dimethylallyl)adenosine tRNA methylthiotransferase MiaB</fullName>
    </alternativeName>
    <alternativeName>
        <fullName evidence="1">tRNA-i(6)A37 methylthiotransferase</fullName>
    </alternativeName>
</protein>
<gene>
    <name evidence="1" type="primary">miaB</name>
    <name type="ordered locus">RHE_CH00376</name>
</gene>